<keyword id="KW-0004">4Fe-4S</keyword>
<keyword id="KW-0274">FAD</keyword>
<keyword id="KW-0285">Flavoprotein</keyword>
<keyword id="KW-0288">FMN</keyword>
<keyword id="KW-0408">Iron</keyword>
<keyword id="KW-0411">Iron-sulfur</keyword>
<keyword id="KW-0479">Metal-binding</keyword>
<keyword id="KW-0521">NADP</keyword>
<keyword id="KW-0547">Nucleotide-binding</keyword>
<keyword id="KW-0560">Oxidoreductase</keyword>
<keyword id="KW-1185">Reference proteome</keyword>
<keyword id="KW-0677">Repeat</keyword>
<name>DPYD_CAEBR</name>
<reference key="1">
    <citation type="journal article" date="2003" name="PLoS Biol.">
        <title>The genome sequence of Caenorhabditis briggsae: a platform for comparative genomics.</title>
        <authorList>
            <person name="Stein L.D."/>
            <person name="Bao Z."/>
            <person name="Blasiar D."/>
            <person name="Blumenthal T."/>
            <person name="Brent M.R."/>
            <person name="Chen N."/>
            <person name="Chinwalla A."/>
            <person name="Clarke L."/>
            <person name="Clee C."/>
            <person name="Coghlan A."/>
            <person name="Coulson A."/>
            <person name="D'Eustachio P."/>
            <person name="Fitch D.H.A."/>
            <person name="Fulton L.A."/>
            <person name="Fulton R.E."/>
            <person name="Griffiths-Jones S."/>
            <person name="Harris T.W."/>
            <person name="Hillier L.W."/>
            <person name="Kamath R."/>
            <person name="Kuwabara P.E."/>
            <person name="Mardis E.R."/>
            <person name="Marra M.A."/>
            <person name="Miner T.L."/>
            <person name="Minx P."/>
            <person name="Mullikin J.C."/>
            <person name="Plumb R.W."/>
            <person name="Rogers J."/>
            <person name="Schein J.E."/>
            <person name="Sohrmann M."/>
            <person name="Spieth J."/>
            <person name="Stajich J.E."/>
            <person name="Wei C."/>
            <person name="Willey D."/>
            <person name="Wilson R.K."/>
            <person name="Durbin R.M."/>
            <person name="Waterston R.H."/>
        </authorList>
    </citation>
    <scope>NUCLEOTIDE SEQUENCE [LARGE SCALE GENOMIC DNA]</scope>
    <source>
        <strain>AF16</strain>
    </source>
</reference>
<dbReference type="EC" id="1.3.1.2"/>
<dbReference type="EMBL" id="HE600983">
    <property type="protein sequence ID" value="CAP33140.2"/>
    <property type="molecule type" value="Genomic_DNA"/>
</dbReference>
<dbReference type="SMR" id="A8XKG6"/>
<dbReference type="FunCoup" id="A8XKG6">
    <property type="interactions" value="776"/>
</dbReference>
<dbReference type="STRING" id="6238.A8XKG6"/>
<dbReference type="WormBase" id="CBG14689">
    <property type="protein sequence ID" value="CBP49349"/>
    <property type="gene ID" value="WBGene00035110"/>
    <property type="gene designation" value="Cbr-dpyd-1"/>
</dbReference>
<dbReference type="eggNOG" id="KOG1799">
    <property type="taxonomic scope" value="Eukaryota"/>
</dbReference>
<dbReference type="HOGENOM" id="CLU_003991_0_0_1"/>
<dbReference type="InParanoid" id="A8XKG6"/>
<dbReference type="OMA" id="SIHCQLQ"/>
<dbReference type="UniPathway" id="UPA00131"/>
<dbReference type="Proteomes" id="UP000008549">
    <property type="component" value="Unassembled WGS sequence"/>
</dbReference>
<dbReference type="GO" id="GO:0005829">
    <property type="term" value="C:cytosol"/>
    <property type="evidence" value="ECO:0000318"/>
    <property type="project" value="GO_Central"/>
</dbReference>
<dbReference type="GO" id="GO:0051539">
    <property type="term" value="F:4 iron, 4 sulfur cluster binding"/>
    <property type="evidence" value="ECO:0007669"/>
    <property type="project" value="UniProtKB-KW"/>
</dbReference>
<dbReference type="GO" id="GO:0017113">
    <property type="term" value="F:dihydropyrimidine dehydrogenase (NADP+) activity"/>
    <property type="evidence" value="ECO:0000318"/>
    <property type="project" value="GO_Central"/>
</dbReference>
<dbReference type="GO" id="GO:0046872">
    <property type="term" value="F:metal ion binding"/>
    <property type="evidence" value="ECO:0007669"/>
    <property type="project" value="UniProtKB-KW"/>
</dbReference>
<dbReference type="GO" id="GO:0050661">
    <property type="term" value="F:NADP binding"/>
    <property type="evidence" value="ECO:0000318"/>
    <property type="project" value="GO_Central"/>
</dbReference>
<dbReference type="GO" id="GO:0002058">
    <property type="term" value="F:uracil binding"/>
    <property type="evidence" value="ECO:0000318"/>
    <property type="project" value="GO_Central"/>
</dbReference>
<dbReference type="GO" id="GO:0019483">
    <property type="term" value="P:beta-alanine biosynthetic process"/>
    <property type="evidence" value="ECO:0007669"/>
    <property type="project" value="UniProtKB-UniPathway"/>
</dbReference>
<dbReference type="GO" id="GO:0006210">
    <property type="term" value="P:thymine catabolic process"/>
    <property type="evidence" value="ECO:0000318"/>
    <property type="project" value="GO_Central"/>
</dbReference>
<dbReference type="GO" id="GO:0006212">
    <property type="term" value="P:uracil catabolic process"/>
    <property type="evidence" value="ECO:0000318"/>
    <property type="project" value="GO_Central"/>
</dbReference>
<dbReference type="CDD" id="cd02940">
    <property type="entry name" value="DHPD_FMN"/>
    <property type="match status" value="1"/>
</dbReference>
<dbReference type="FunFam" id="1.10.1060.10:FF:000007">
    <property type="entry name" value="Dihydropyrimidine dehydrogenase [NADP(+)]"/>
    <property type="match status" value="1"/>
</dbReference>
<dbReference type="FunFam" id="3.20.20.70:FF:000027">
    <property type="entry name" value="Dihydropyrimidine dehydrogenase [NADP(+)]"/>
    <property type="match status" value="1"/>
</dbReference>
<dbReference type="FunFam" id="3.30.70.20:FF:000023">
    <property type="entry name" value="Dihydropyrimidine dehydrogenase [NADP(+)]"/>
    <property type="match status" value="1"/>
</dbReference>
<dbReference type="FunFam" id="3.50.50.60:FF:000056">
    <property type="entry name" value="Dihydropyrimidine dehydrogenase [NADP(+)]"/>
    <property type="match status" value="1"/>
</dbReference>
<dbReference type="FunFam" id="3.50.50.60:FF:000061">
    <property type="entry name" value="Dihydropyrimidine dehydrogenase [NADP(+)]"/>
    <property type="match status" value="1"/>
</dbReference>
<dbReference type="Gene3D" id="3.30.70.20">
    <property type="match status" value="1"/>
</dbReference>
<dbReference type="Gene3D" id="3.20.20.70">
    <property type="entry name" value="Aldolase class I"/>
    <property type="match status" value="1"/>
</dbReference>
<dbReference type="Gene3D" id="1.10.1060.10">
    <property type="entry name" value="Alpha-helical ferredoxin"/>
    <property type="match status" value="1"/>
</dbReference>
<dbReference type="Gene3D" id="3.50.50.60">
    <property type="entry name" value="FAD/NAD(P)-binding domain"/>
    <property type="match status" value="2"/>
</dbReference>
<dbReference type="InterPro" id="IPR017896">
    <property type="entry name" value="4Fe4S_Fe-S-bd"/>
</dbReference>
<dbReference type="InterPro" id="IPR017900">
    <property type="entry name" value="4Fe4S_Fe_S_CS"/>
</dbReference>
<dbReference type="InterPro" id="IPR013785">
    <property type="entry name" value="Aldolase_TIM"/>
</dbReference>
<dbReference type="InterPro" id="IPR005720">
    <property type="entry name" value="Dihydroorotate_DH_cat"/>
</dbReference>
<dbReference type="InterPro" id="IPR028261">
    <property type="entry name" value="DPD_II"/>
</dbReference>
<dbReference type="InterPro" id="IPR036188">
    <property type="entry name" value="FAD/NAD-bd_sf"/>
</dbReference>
<dbReference type="InterPro" id="IPR023753">
    <property type="entry name" value="FAD/NAD-binding_dom"/>
</dbReference>
<dbReference type="InterPro" id="IPR009051">
    <property type="entry name" value="Helical_ferredxn"/>
</dbReference>
<dbReference type="PANTHER" id="PTHR43073">
    <property type="entry name" value="DIHYDROPYRIMIDINE DEHYDROGENASE [NADP(+)]"/>
    <property type="match status" value="1"/>
</dbReference>
<dbReference type="PANTHER" id="PTHR43073:SF2">
    <property type="entry name" value="DIHYDROPYRIMIDINE DEHYDROGENASE [NADP(+)]"/>
    <property type="match status" value="1"/>
</dbReference>
<dbReference type="Pfam" id="PF01180">
    <property type="entry name" value="DHO_dh"/>
    <property type="match status" value="1"/>
</dbReference>
<dbReference type="Pfam" id="PF14691">
    <property type="entry name" value="Fer4_20"/>
    <property type="match status" value="1"/>
</dbReference>
<dbReference type="Pfam" id="PF14697">
    <property type="entry name" value="Fer4_21"/>
    <property type="match status" value="1"/>
</dbReference>
<dbReference type="Pfam" id="PF07992">
    <property type="entry name" value="Pyr_redox_2"/>
    <property type="match status" value="1"/>
</dbReference>
<dbReference type="PRINTS" id="PR00419">
    <property type="entry name" value="ADXRDTASE"/>
</dbReference>
<dbReference type="SUPFAM" id="SSF54862">
    <property type="entry name" value="4Fe-4S ferredoxins"/>
    <property type="match status" value="1"/>
</dbReference>
<dbReference type="SUPFAM" id="SSF46548">
    <property type="entry name" value="alpha-helical ferredoxin"/>
    <property type="match status" value="1"/>
</dbReference>
<dbReference type="SUPFAM" id="SSF51395">
    <property type="entry name" value="FMN-linked oxidoreductases"/>
    <property type="match status" value="1"/>
</dbReference>
<dbReference type="SUPFAM" id="SSF51971">
    <property type="entry name" value="Nucleotide-binding domain"/>
    <property type="match status" value="2"/>
</dbReference>
<dbReference type="PROSITE" id="PS00198">
    <property type="entry name" value="4FE4S_FER_1"/>
    <property type="match status" value="1"/>
</dbReference>
<dbReference type="PROSITE" id="PS51379">
    <property type="entry name" value="4FE4S_FER_2"/>
    <property type="match status" value="3"/>
</dbReference>
<accession>A8XKG6</accession>
<gene>
    <name evidence="5" type="primary">dpyd-1</name>
    <name evidence="5" type="ORF">CBG14689</name>
</gene>
<feature type="chain" id="PRO_0000355577" description="Probable dihydropyrimidine dehydrogenase [NADP(+)]">
    <location>
        <begin position="1"/>
        <end position="1053"/>
    </location>
</feature>
<feature type="domain" description="4Fe-4S ferredoxin-type 1" evidence="4">
    <location>
        <begin position="84"/>
        <end position="115"/>
    </location>
</feature>
<feature type="domain" description="4Fe-4S ferredoxin-type 2" evidence="4">
    <location>
        <begin position="949"/>
        <end position="981"/>
    </location>
</feature>
<feature type="domain" description="4Fe-4S ferredoxin-type 3" evidence="4">
    <location>
        <begin position="983"/>
        <end position="1013"/>
    </location>
</feature>
<feature type="active site" description="Proton acceptor" evidence="1">
    <location>
        <position position="695"/>
    </location>
</feature>
<feature type="binding site" evidence="1">
    <location>
        <position position="94"/>
    </location>
    <ligand>
        <name>[4Fe-4S] cluster</name>
        <dbReference type="ChEBI" id="CHEBI:49883"/>
        <label>1</label>
    </ligand>
</feature>
<feature type="binding site" evidence="1">
    <location>
        <position position="97"/>
    </location>
    <ligand>
        <name>[4Fe-4S] cluster</name>
        <dbReference type="ChEBI" id="CHEBI:49883"/>
        <label>1</label>
    </ligand>
</feature>
<feature type="binding site" evidence="1">
    <location>
        <position position="102"/>
    </location>
    <ligand>
        <name>[4Fe-4S] cluster</name>
        <dbReference type="ChEBI" id="CHEBI:49883"/>
        <label>1</label>
    </ligand>
</feature>
<feature type="binding site" evidence="1">
    <location>
        <position position="106"/>
    </location>
    <ligand>
        <name>[4Fe-4S] cluster</name>
        <dbReference type="ChEBI" id="CHEBI:49883"/>
        <label>2</label>
    </ligand>
</feature>
<feature type="binding site" evidence="1">
    <location>
        <position position="145"/>
    </location>
    <ligand>
        <name>[4Fe-4S] cluster</name>
        <dbReference type="ChEBI" id="CHEBI:49883"/>
        <label>2</label>
    </ligand>
</feature>
<feature type="binding site" evidence="1">
    <location>
        <position position="151"/>
    </location>
    <ligand>
        <name>[4Fe-4S] cluster</name>
        <dbReference type="ChEBI" id="CHEBI:49883"/>
        <label>2</label>
    </ligand>
</feature>
<feature type="binding site" evidence="1">
    <location>
        <position position="155"/>
    </location>
    <ligand>
        <name>[4Fe-4S] cluster</name>
        <dbReference type="ChEBI" id="CHEBI:49883"/>
        <label>1</label>
    </ligand>
</feature>
<feature type="binding site" evidence="1">
    <location>
        <position position="171"/>
    </location>
    <ligand>
        <name>[4Fe-4S] cluster</name>
        <dbReference type="ChEBI" id="CHEBI:49883"/>
        <label>2</label>
    </ligand>
</feature>
<feature type="binding site" evidence="1">
    <location>
        <begin position="207"/>
        <end position="211"/>
    </location>
    <ligand>
        <name>FAD</name>
        <dbReference type="ChEBI" id="CHEBI:57692"/>
    </ligand>
</feature>
<feature type="binding site" evidence="1">
    <location>
        <begin position="231"/>
        <end position="239"/>
    </location>
    <ligand>
        <name>FAD</name>
        <dbReference type="ChEBI" id="CHEBI:57692"/>
    </ligand>
</feature>
<feature type="binding site" evidence="1">
    <location>
        <position position="248"/>
    </location>
    <ligand>
        <name>FAD</name>
        <dbReference type="ChEBI" id="CHEBI:57692"/>
    </ligand>
</feature>
<feature type="binding site" evidence="1">
    <location>
        <position position="274"/>
    </location>
    <ligand>
        <name>FAD</name>
        <dbReference type="ChEBI" id="CHEBI:57692"/>
    </ligand>
</feature>
<feature type="binding site" evidence="1">
    <location>
        <begin position="354"/>
        <end position="357"/>
    </location>
    <ligand>
        <name>NADP(+)</name>
        <dbReference type="ChEBI" id="CHEBI:58349"/>
    </ligand>
</feature>
<feature type="binding site" evidence="1">
    <location>
        <begin position="378"/>
        <end position="379"/>
    </location>
    <ligand>
        <name>NADP(+)</name>
        <dbReference type="ChEBI" id="CHEBI:58349"/>
    </ligand>
</feature>
<feature type="binding site" evidence="1">
    <location>
        <position position="385"/>
    </location>
    <ligand>
        <name>NADP(+)</name>
        <dbReference type="ChEBI" id="CHEBI:58349"/>
    </ligand>
</feature>
<feature type="binding site" evidence="1">
    <location>
        <begin position="451"/>
        <end position="453"/>
    </location>
    <ligand>
        <name>NADP(+)</name>
        <dbReference type="ChEBI" id="CHEBI:58349"/>
    </ligand>
</feature>
<feature type="binding site" evidence="1">
    <location>
        <begin position="494"/>
        <end position="503"/>
    </location>
    <ligand>
        <name>FAD</name>
        <dbReference type="ChEBI" id="CHEBI:57692"/>
    </ligand>
</feature>
<feature type="binding site" evidence="1">
    <location>
        <begin position="495"/>
        <end position="501"/>
    </location>
    <ligand>
        <name>NADP(+)</name>
        <dbReference type="ChEBI" id="CHEBI:58349"/>
    </ligand>
</feature>
<feature type="binding site" evidence="1">
    <location>
        <position position="574"/>
    </location>
    <ligand>
        <name>FMN</name>
        <dbReference type="ChEBI" id="CHEBI:58210"/>
    </ligand>
</feature>
<feature type="binding site" evidence="1">
    <location>
        <begin position="598"/>
        <end position="599"/>
    </location>
    <ligand>
        <name>FMN</name>
        <dbReference type="ChEBI" id="CHEBI:58210"/>
    </ligand>
</feature>
<feature type="binding site" evidence="1">
    <location>
        <position position="633"/>
    </location>
    <ligand>
        <name>substrate</name>
    </ligand>
</feature>
<feature type="binding site" evidence="1">
    <location>
        <begin position="692"/>
        <end position="694"/>
    </location>
    <ligand>
        <name>substrate</name>
    </ligand>
</feature>
<feature type="binding site" evidence="1">
    <location>
        <position position="733"/>
    </location>
    <ligand>
        <name>FMN</name>
        <dbReference type="ChEBI" id="CHEBI:58210"/>
    </ligand>
</feature>
<feature type="binding site" evidence="1">
    <location>
        <begin position="760"/>
        <end position="761"/>
    </location>
    <ligand>
        <name>substrate</name>
    </ligand>
</feature>
<feature type="binding site" evidence="1">
    <location>
        <position position="791"/>
    </location>
    <ligand>
        <name>FMN</name>
        <dbReference type="ChEBI" id="CHEBI:58210"/>
    </ligand>
</feature>
<feature type="binding site" evidence="1">
    <location>
        <begin position="817"/>
        <end position="819"/>
    </location>
    <ligand>
        <name>FMN</name>
        <dbReference type="ChEBI" id="CHEBI:58210"/>
    </ligand>
</feature>
<feature type="binding site" evidence="1">
    <location>
        <begin position="840"/>
        <end position="841"/>
    </location>
    <ligand>
        <name>FMN</name>
        <dbReference type="ChEBI" id="CHEBI:58210"/>
    </ligand>
</feature>
<feature type="binding site" evidence="1">
    <location>
        <position position="958"/>
    </location>
    <ligand>
        <name>[4Fe-4S] cluster</name>
        <dbReference type="ChEBI" id="CHEBI:49883"/>
        <label>3</label>
    </ligand>
</feature>
<feature type="binding site" evidence="1">
    <location>
        <position position="961"/>
    </location>
    <ligand>
        <name>[4Fe-4S] cluster</name>
        <dbReference type="ChEBI" id="CHEBI:49883"/>
        <label>3</label>
    </ligand>
</feature>
<feature type="binding site" evidence="1">
    <location>
        <position position="964"/>
    </location>
    <ligand>
        <name>[4Fe-4S] cluster</name>
        <dbReference type="ChEBI" id="CHEBI:49883"/>
        <label>3</label>
    </ligand>
</feature>
<feature type="binding site" evidence="1">
    <location>
        <position position="968"/>
    </location>
    <ligand>
        <name>[4Fe-4S] cluster</name>
        <dbReference type="ChEBI" id="CHEBI:49883"/>
        <label>3</label>
    </ligand>
</feature>
<feature type="binding site" evidence="1">
    <location>
        <position position="992"/>
    </location>
    <ligand>
        <name>[4Fe-4S] cluster</name>
        <dbReference type="ChEBI" id="CHEBI:49883"/>
        <label>4</label>
    </ligand>
</feature>
<feature type="binding site" evidence="1">
    <location>
        <position position="995"/>
    </location>
    <ligand>
        <name>[4Fe-4S] cluster</name>
        <dbReference type="ChEBI" id="CHEBI:49883"/>
        <label>4</label>
    </ligand>
</feature>
<feature type="binding site" evidence="1">
    <location>
        <position position="998"/>
    </location>
    <ligand>
        <name>[4Fe-4S] cluster</name>
        <dbReference type="ChEBI" id="CHEBI:49883"/>
        <label>4</label>
    </ligand>
</feature>
<feature type="binding site" evidence="1">
    <location>
        <position position="1002"/>
    </location>
    <ligand>
        <name>[4Fe-4S] cluster</name>
        <dbReference type="ChEBI" id="CHEBI:49883"/>
        <label>4</label>
    </ligand>
</feature>
<protein>
    <recommendedName>
        <fullName>Probable dihydropyrimidine dehydrogenase [NADP(+)]</fullName>
        <shortName>DHPDHase</shortName>
        <shortName>DPD</shortName>
        <ecNumber>1.3.1.2</ecNumber>
    </recommendedName>
    <alternativeName>
        <fullName>Dihydrothymine dehydrogenase</fullName>
    </alternativeName>
    <alternativeName>
        <fullName>Dihydrouracil dehydrogenase</fullName>
    </alternativeName>
</protein>
<sequence length="1053" mass="114672">MTPKPNTSNPNVGLPLLSKDSPDIESLLILNPKVQSKANAVPSAVTKKNKHNWKRNEEKGCGASCGESKLKNDFRDIKHTTLSERGALKEAMRCLKCADAPCQKSCPTQLDIKSFITSISNKNYYGAARAILSDNPLGLTCGMICPTSDLCVGSCNLQASEEGAINIGGLQQYACDVFKQMNVRQIVSKEVRENRNASHKEQIALIGCGPASISCASFLARLGYTDITIYEKRAYIGGLSSAEIPQFRLPYDVVDFEIQLARDVGVKIETNRSLCKEDITLDKLKSQGAAAVFIGIGNPEPKIDPLFEGLTIENGFYTSKNYLPAVAAASKPGMCGCKRTPLPTMRGRVVVLGAGDTAMDCATSALRCGASRVTIAFRKGFTGIRAVPEEMEAAKEEKCEFLPFSAPRKINVKDGRIVSIEFNKTEQDDNGKWYEDEEQIVILKCDYVISAFGSTLKEDTVLSALQPCKLNKWGGIEVDSTTQQTSEAWVFAGGDVAGVAETTVESVNDGKTLMDLTFKIQIAAWNMHRYIQAKHGNVLGETPELPKFFTPIDEVDISVDMCGVKFENPFGLASAPPTTSGPMCRRAFEQGWGFILTKTYGLDKDLVTNVSPRIVRGSTSGPLYGPNQGSFMNIELISEKSCEYWLQCIRELKRDHPTKIVVASIMCVYNKEDWIELATKSEAAGADILELNLSCPHGMGEKGMGLACGQSPEIVKEICRWVRACVKIPFFPKMTPNITDVREIARAARDGGASGVTATNTVSSLMHMKADGNAWPAIGNTKRTTYGGMSGSAIRPIAMKAVSSIANELDGFPIMATGGIESAETGLGFLMAGASVLQVCSAVQNQDFTVVEDYCTGLKALLYLSGAESLKEWDGQSPPVEKHQKGKPILLQGQKNMPFFGKFRDEREKLEALKLSESNLLDTDNYHFASRPDTQVARVPTVEDVIEHEVAIIDHDMCINCGKCYMTCNDSGYQAITFDAVTHQPHVTEDDCTGCTLCYSVCPIPECIQMVPRKGPWKAPKRGVKPTVEPGTPKVVKVDQRGRVILESTGGMQ</sequence>
<comment type="function">
    <text evidence="2">Involved in pyrimidine base degradation. Catalyzes the reduction of uracil and thymine. Also involved the degradation of the chemotherapeutic drug 5-fluorouracil (By similarity).</text>
</comment>
<comment type="catalytic activity">
    <reaction evidence="2">
        <text>5,6-dihydrouracil + NADP(+) = uracil + NADPH + H(+)</text>
        <dbReference type="Rhea" id="RHEA:18093"/>
        <dbReference type="ChEBI" id="CHEBI:15378"/>
        <dbReference type="ChEBI" id="CHEBI:15901"/>
        <dbReference type="ChEBI" id="CHEBI:17568"/>
        <dbReference type="ChEBI" id="CHEBI:57783"/>
        <dbReference type="ChEBI" id="CHEBI:58349"/>
        <dbReference type="EC" id="1.3.1.2"/>
    </reaction>
</comment>
<comment type="cofactor">
    <cofactor evidence="1">
        <name>[4Fe-4S] cluster</name>
        <dbReference type="ChEBI" id="CHEBI:49883"/>
    </cofactor>
    <text evidence="1">Binds 4 [4Fe-4S] clusters. Contains approximately 16 iron atoms per subunit.</text>
</comment>
<comment type="cofactor">
    <cofactor evidence="2">
        <name>FAD</name>
        <dbReference type="ChEBI" id="CHEBI:57692"/>
    </cofactor>
</comment>
<comment type="cofactor">
    <cofactor evidence="2">
        <name>FMN</name>
        <dbReference type="ChEBI" id="CHEBI:58210"/>
    </cofactor>
</comment>
<comment type="pathway">
    <text evidence="2">Amino-acid biosynthesis; beta-alanine biosynthesis.</text>
</comment>
<comment type="similarity">
    <text evidence="3">Belongs to the dihydropyrimidine dehydrogenase family.</text>
</comment>
<evidence type="ECO:0000250" key="1"/>
<evidence type="ECO:0000250" key="2">
    <source>
        <dbReference type="UniProtKB" id="Q12882"/>
    </source>
</evidence>
<evidence type="ECO:0000255" key="3"/>
<evidence type="ECO:0000255" key="4">
    <source>
        <dbReference type="PROSITE-ProRule" id="PRU00711"/>
    </source>
</evidence>
<evidence type="ECO:0000312" key="5">
    <source>
        <dbReference type="WormBase" id="CBG14689"/>
    </source>
</evidence>
<proteinExistence type="inferred from homology"/>
<organism>
    <name type="scientific">Caenorhabditis briggsae</name>
    <dbReference type="NCBI Taxonomy" id="6238"/>
    <lineage>
        <taxon>Eukaryota</taxon>
        <taxon>Metazoa</taxon>
        <taxon>Ecdysozoa</taxon>
        <taxon>Nematoda</taxon>
        <taxon>Chromadorea</taxon>
        <taxon>Rhabditida</taxon>
        <taxon>Rhabditina</taxon>
        <taxon>Rhabditomorpha</taxon>
        <taxon>Rhabditoidea</taxon>
        <taxon>Rhabditidae</taxon>
        <taxon>Peloderinae</taxon>
        <taxon>Caenorhabditis</taxon>
    </lineage>
</organism>